<feature type="chain" id="PRO_0000271597" description="DNA protection during starvation protein">
    <location>
        <begin position="1"/>
        <end position="167"/>
    </location>
</feature>
<feature type="binding site" evidence="1">
    <location>
        <position position="51"/>
    </location>
    <ligand>
        <name>Fe cation</name>
        <dbReference type="ChEBI" id="CHEBI:24875"/>
    </ligand>
</feature>
<feature type="binding site" evidence="1">
    <location>
        <position position="78"/>
    </location>
    <ligand>
        <name>Fe cation</name>
        <dbReference type="ChEBI" id="CHEBI:24875"/>
    </ligand>
</feature>
<feature type="binding site" evidence="1">
    <location>
        <position position="82"/>
    </location>
    <ligand>
        <name>Fe cation</name>
        <dbReference type="ChEBI" id="CHEBI:24875"/>
    </ligand>
</feature>
<reference key="1">
    <citation type="journal article" date="2006" name="Genome Res.">
        <title>Massive genome erosion and functional adaptations provide insights into the symbiotic lifestyle of Sodalis glossinidius in the tsetse host.</title>
        <authorList>
            <person name="Toh H."/>
            <person name="Weiss B.L."/>
            <person name="Perkin S.A.H."/>
            <person name="Yamashita A."/>
            <person name="Oshima K."/>
            <person name="Hattori M."/>
            <person name="Aksoy S."/>
        </authorList>
    </citation>
    <scope>NUCLEOTIDE SEQUENCE [LARGE SCALE GENOMIC DNA]</scope>
    <source>
        <strain>morsitans</strain>
    </source>
</reference>
<keyword id="KW-0963">Cytoplasm</keyword>
<keyword id="KW-0226">DNA condensation</keyword>
<keyword id="KW-0238">DNA-binding</keyword>
<keyword id="KW-0408">Iron</keyword>
<keyword id="KW-0409">Iron storage</keyword>
<keyword id="KW-0479">Metal-binding</keyword>
<keyword id="KW-0560">Oxidoreductase</keyword>
<accession>Q2NUI3</accession>
<gene>
    <name evidence="1" type="primary">dps</name>
    <name type="ordered locus">SG0917</name>
</gene>
<sequence>MSTAKLVKTKSSELIFTRNDVDEEVKTTTIVTLNRIVIELVDLALITKQAHWNMRGNNFIGVHEMLDGFRTAILEHQDTIAERVVQLGGVALGTVQVTNDKTPLKSYPTNIHTVQDHLKALADRYGIVANDVRKAITEVEDDDTADIFTAASRDLDKFLWFIESNIE</sequence>
<comment type="function">
    <text evidence="1">During stationary phase, binds the chromosome non-specifically, forming a highly ordered and stable dps-DNA co-crystal within which chromosomal DNA is condensed and protected from diverse damages. It protects DNA from oxidative damage by sequestering intracellular Fe(2+) ion and storing it in the form of Fe(3+) oxyhydroxide mineral, which can be released after reduction. One hydrogen peroxide oxidizes two Fe(2+) ions, which prevents hydroxyl radical production by the Fenton reaction.</text>
</comment>
<comment type="catalytic activity">
    <reaction evidence="1">
        <text>2 Fe(2+) + H2O2 + 2 H(+) = 2 Fe(3+) + 2 H2O</text>
        <dbReference type="Rhea" id="RHEA:48712"/>
        <dbReference type="ChEBI" id="CHEBI:15377"/>
        <dbReference type="ChEBI" id="CHEBI:15378"/>
        <dbReference type="ChEBI" id="CHEBI:16240"/>
        <dbReference type="ChEBI" id="CHEBI:29033"/>
        <dbReference type="ChEBI" id="CHEBI:29034"/>
    </reaction>
</comment>
<comment type="subunit">
    <text evidence="1">Homododecamer. The 12 subunits form a hollow sphere into which the mineral iron core of up to 500 Fe(3+) can be deposited.</text>
</comment>
<comment type="subcellular location">
    <subcellularLocation>
        <location evidence="1">Cytoplasm</location>
    </subcellularLocation>
</comment>
<comment type="similarity">
    <text evidence="1">Belongs to the Dps family.</text>
</comment>
<organism>
    <name type="scientific">Sodalis glossinidius (strain morsitans)</name>
    <dbReference type="NCBI Taxonomy" id="343509"/>
    <lineage>
        <taxon>Bacteria</taxon>
        <taxon>Pseudomonadati</taxon>
        <taxon>Pseudomonadota</taxon>
        <taxon>Gammaproteobacteria</taxon>
        <taxon>Enterobacterales</taxon>
        <taxon>Bruguierivoracaceae</taxon>
        <taxon>Sodalis</taxon>
    </lineage>
</organism>
<name>DPS_SODGM</name>
<proteinExistence type="inferred from homology"/>
<evidence type="ECO:0000255" key="1">
    <source>
        <dbReference type="HAMAP-Rule" id="MF_01441"/>
    </source>
</evidence>
<dbReference type="EC" id="1.16.-.-" evidence="1"/>
<dbReference type="EMBL" id="AP008232">
    <property type="protein sequence ID" value="BAE74192.1"/>
    <property type="molecule type" value="Genomic_DNA"/>
</dbReference>
<dbReference type="RefSeq" id="WP_011410778.1">
    <property type="nucleotide sequence ID" value="NC_007712.1"/>
</dbReference>
<dbReference type="SMR" id="Q2NUI3"/>
<dbReference type="STRING" id="343509.SG0917"/>
<dbReference type="KEGG" id="sgl:SG0917"/>
<dbReference type="eggNOG" id="COG0783">
    <property type="taxonomic scope" value="Bacteria"/>
</dbReference>
<dbReference type="HOGENOM" id="CLU_098183_1_2_6"/>
<dbReference type="OrthoDB" id="9797687at2"/>
<dbReference type="BioCyc" id="SGLO343509:SGP1_RS07835-MONOMER"/>
<dbReference type="Proteomes" id="UP000001932">
    <property type="component" value="Chromosome"/>
</dbReference>
<dbReference type="GO" id="GO:0005737">
    <property type="term" value="C:cytoplasm"/>
    <property type="evidence" value="ECO:0007669"/>
    <property type="project" value="UniProtKB-SubCell"/>
</dbReference>
<dbReference type="GO" id="GO:0003677">
    <property type="term" value="F:DNA binding"/>
    <property type="evidence" value="ECO:0007669"/>
    <property type="project" value="UniProtKB-UniRule"/>
</dbReference>
<dbReference type="GO" id="GO:0008199">
    <property type="term" value="F:ferric iron binding"/>
    <property type="evidence" value="ECO:0007669"/>
    <property type="project" value="UniProtKB-UniRule"/>
</dbReference>
<dbReference type="GO" id="GO:0016722">
    <property type="term" value="F:oxidoreductase activity, acting on metal ions"/>
    <property type="evidence" value="ECO:0007669"/>
    <property type="project" value="InterPro"/>
</dbReference>
<dbReference type="GO" id="GO:0030261">
    <property type="term" value="P:chromosome condensation"/>
    <property type="evidence" value="ECO:0007669"/>
    <property type="project" value="UniProtKB-KW"/>
</dbReference>
<dbReference type="GO" id="GO:0006879">
    <property type="term" value="P:intracellular iron ion homeostasis"/>
    <property type="evidence" value="ECO:0007669"/>
    <property type="project" value="UniProtKB-KW"/>
</dbReference>
<dbReference type="CDD" id="cd01043">
    <property type="entry name" value="DPS"/>
    <property type="match status" value="1"/>
</dbReference>
<dbReference type="Gene3D" id="1.20.1260.10">
    <property type="match status" value="1"/>
</dbReference>
<dbReference type="HAMAP" id="MF_01441">
    <property type="entry name" value="Dps"/>
    <property type="match status" value="1"/>
</dbReference>
<dbReference type="InterPro" id="IPR002177">
    <property type="entry name" value="DPS_DNA-bd"/>
</dbReference>
<dbReference type="InterPro" id="IPR023188">
    <property type="entry name" value="DPS_DNA-bd_CS"/>
</dbReference>
<dbReference type="InterPro" id="IPR023067">
    <property type="entry name" value="Dps_gammaproteobac"/>
</dbReference>
<dbReference type="InterPro" id="IPR012347">
    <property type="entry name" value="Ferritin-like"/>
</dbReference>
<dbReference type="InterPro" id="IPR009078">
    <property type="entry name" value="Ferritin-like_SF"/>
</dbReference>
<dbReference type="InterPro" id="IPR008331">
    <property type="entry name" value="Ferritin_DPS_dom"/>
</dbReference>
<dbReference type="NCBIfam" id="NF006975">
    <property type="entry name" value="PRK09448.1"/>
    <property type="match status" value="1"/>
</dbReference>
<dbReference type="PANTHER" id="PTHR42932:SF3">
    <property type="entry name" value="DNA PROTECTION DURING STARVATION PROTEIN"/>
    <property type="match status" value="1"/>
</dbReference>
<dbReference type="PANTHER" id="PTHR42932">
    <property type="entry name" value="GENERAL STRESS PROTEIN 20U"/>
    <property type="match status" value="1"/>
</dbReference>
<dbReference type="Pfam" id="PF00210">
    <property type="entry name" value="Ferritin"/>
    <property type="match status" value="1"/>
</dbReference>
<dbReference type="PIRSF" id="PIRSF005900">
    <property type="entry name" value="Dps"/>
    <property type="match status" value="1"/>
</dbReference>
<dbReference type="PRINTS" id="PR01346">
    <property type="entry name" value="HELNAPAPROT"/>
</dbReference>
<dbReference type="SUPFAM" id="SSF47240">
    <property type="entry name" value="Ferritin-like"/>
    <property type="match status" value="1"/>
</dbReference>
<dbReference type="PROSITE" id="PS00818">
    <property type="entry name" value="DPS_1"/>
    <property type="match status" value="1"/>
</dbReference>
<protein>
    <recommendedName>
        <fullName evidence="1">DNA protection during starvation protein</fullName>
        <ecNumber evidence="1">1.16.-.-</ecNumber>
    </recommendedName>
</protein>